<name>BIOB_ACICA</name>
<gene>
    <name evidence="1" type="primary">bioB</name>
</gene>
<reference key="1">
    <citation type="submission" date="2000-02" db="EMBL/GenBank/DDBJ databases">
        <title>Genetic characterization of Acinetobacter calcoaceticus RAG-1 transposon mutants.</title>
        <authorList>
            <person name="Blank W.A."/>
            <person name="Kaplan D.L."/>
        </authorList>
    </citation>
    <scope>NUCLEOTIDE SEQUENCE [GENOMIC DNA]</scope>
    <source>
        <strain>ATCC 31012 / RAG-1</strain>
    </source>
</reference>
<keyword id="KW-0001">2Fe-2S</keyword>
<keyword id="KW-0004">4Fe-4S</keyword>
<keyword id="KW-0093">Biotin biosynthesis</keyword>
<keyword id="KW-0408">Iron</keyword>
<keyword id="KW-0411">Iron-sulfur</keyword>
<keyword id="KW-0479">Metal-binding</keyword>
<keyword id="KW-0949">S-adenosyl-L-methionine</keyword>
<keyword id="KW-0808">Transferase</keyword>
<proteinExistence type="inferred from homology"/>
<feature type="chain" id="PRO_0000381175" description="Biotin synthase">
    <location>
        <begin position="1"/>
        <end position="329"/>
    </location>
</feature>
<feature type="domain" description="Radical SAM core" evidence="2">
    <location>
        <begin position="38"/>
        <end position="262"/>
    </location>
</feature>
<feature type="binding site" evidence="1">
    <location>
        <position position="53"/>
    </location>
    <ligand>
        <name>[4Fe-4S] cluster</name>
        <dbReference type="ChEBI" id="CHEBI:49883"/>
        <note>4Fe-4S-S-AdoMet</note>
    </ligand>
</feature>
<feature type="binding site" evidence="1">
    <location>
        <position position="57"/>
    </location>
    <ligand>
        <name>[4Fe-4S] cluster</name>
        <dbReference type="ChEBI" id="CHEBI:49883"/>
        <note>4Fe-4S-S-AdoMet</note>
    </ligand>
</feature>
<feature type="binding site" evidence="1">
    <location>
        <position position="60"/>
    </location>
    <ligand>
        <name>[4Fe-4S] cluster</name>
        <dbReference type="ChEBI" id="CHEBI:49883"/>
        <note>4Fe-4S-S-AdoMet</note>
    </ligand>
</feature>
<feature type="binding site" evidence="1">
    <location>
        <position position="97"/>
    </location>
    <ligand>
        <name>[2Fe-2S] cluster</name>
        <dbReference type="ChEBI" id="CHEBI:190135"/>
    </ligand>
</feature>
<feature type="binding site" evidence="1">
    <location>
        <position position="128"/>
    </location>
    <ligand>
        <name>[2Fe-2S] cluster</name>
        <dbReference type="ChEBI" id="CHEBI:190135"/>
    </ligand>
</feature>
<feature type="binding site" evidence="1">
    <location>
        <position position="188"/>
    </location>
    <ligand>
        <name>[2Fe-2S] cluster</name>
        <dbReference type="ChEBI" id="CHEBI:190135"/>
    </ligand>
</feature>
<feature type="binding site" evidence="1">
    <location>
        <position position="260"/>
    </location>
    <ligand>
        <name>[2Fe-2S] cluster</name>
        <dbReference type="ChEBI" id="CHEBI:190135"/>
    </ligand>
</feature>
<organism>
    <name type="scientific">Acinetobacter calcoaceticus</name>
    <dbReference type="NCBI Taxonomy" id="471"/>
    <lineage>
        <taxon>Bacteria</taxon>
        <taxon>Pseudomonadati</taxon>
        <taxon>Pseudomonadota</taxon>
        <taxon>Gammaproteobacteria</taxon>
        <taxon>Moraxellales</taxon>
        <taxon>Moraxellaceae</taxon>
        <taxon>Acinetobacter</taxon>
        <taxon>Acinetobacter calcoaceticus/baumannii complex</taxon>
    </lineage>
</organism>
<accession>Q93GG2</accession>
<dbReference type="EC" id="2.8.1.6" evidence="1"/>
<dbReference type="EMBL" id="AF239257">
    <property type="protein sequence ID" value="AAK96892.1"/>
    <property type="molecule type" value="Genomic_DNA"/>
</dbReference>
<dbReference type="SMR" id="Q93GG2"/>
<dbReference type="STRING" id="471.BUM88_08350"/>
<dbReference type="UniPathway" id="UPA00078">
    <property type="reaction ID" value="UER00162"/>
</dbReference>
<dbReference type="GO" id="GO:0051537">
    <property type="term" value="F:2 iron, 2 sulfur cluster binding"/>
    <property type="evidence" value="ECO:0007669"/>
    <property type="project" value="UniProtKB-KW"/>
</dbReference>
<dbReference type="GO" id="GO:0051539">
    <property type="term" value="F:4 iron, 4 sulfur cluster binding"/>
    <property type="evidence" value="ECO:0007669"/>
    <property type="project" value="UniProtKB-KW"/>
</dbReference>
<dbReference type="GO" id="GO:0004076">
    <property type="term" value="F:biotin synthase activity"/>
    <property type="evidence" value="ECO:0007669"/>
    <property type="project" value="UniProtKB-UniRule"/>
</dbReference>
<dbReference type="GO" id="GO:0005506">
    <property type="term" value="F:iron ion binding"/>
    <property type="evidence" value="ECO:0007669"/>
    <property type="project" value="UniProtKB-UniRule"/>
</dbReference>
<dbReference type="GO" id="GO:0009102">
    <property type="term" value="P:biotin biosynthetic process"/>
    <property type="evidence" value="ECO:0007669"/>
    <property type="project" value="UniProtKB-UniRule"/>
</dbReference>
<dbReference type="CDD" id="cd01335">
    <property type="entry name" value="Radical_SAM"/>
    <property type="match status" value="1"/>
</dbReference>
<dbReference type="FunFam" id="3.20.20.70:FF:000011">
    <property type="entry name" value="Biotin synthase"/>
    <property type="match status" value="1"/>
</dbReference>
<dbReference type="Gene3D" id="3.20.20.70">
    <property type="entry name" value="Aldolase class I"/>
    <property type="match status" value="1"/>
</dbReference>
<dbReference type="HAMAP" id="MF_01694">
    <property type="entry name" value="BioB"/>
    <property type="match status" value="1"/>
</dbReference>
<dbReference type="InterPro" id="IPR013785">
    <property type="entry name" value="Aldolase_TIM"/>
</dbReference>
<dbReference type="InterPro" id="IPR010722">
    <property type="entry name" value="BATS_dom"/>
</dbReference>
<dbReference type="InterPro" id="IPR002684">
    <property type="entry name" value="Biotin_synth/BioAB"/>
</dbReference>
<dbReference type="InterPro" id="IPR024177">
    <property type="entry name" value="Biotin_synthase"/>
</dbReference>
<dbReference type="InterPro" id="IPR006638">
    <property type="entry name" value="Elp3/MiaA/NifB-like_rSAM"/>
</dbReference>
<dbReference type="InterPro" id="IPR007197">
    <property type="entry name" value="rSAM"/>
</dbReference>
<dbReference type="NCBIfam" id="TIGR00433">
    <property type="entry name" value="bioB"/>
    <property type="match status" value="1"/>
</dbReference>
<dbReference type="PANTHER" id="PTHR22976">
    <property type="entry name" value="BIOTIN SYNTHASE"/>
    <property type="match status" value="1"/>
</dbReference>
<dbReference type="PANTHER" id="PTHR22976:SF2">
    <property type="entry name" value="BIOTIN SYNTHASE, MITOCHONDRIAL"/>
    <property type="match status" value="1"/>
</dbReference>
<dbReference type="Pfam" id="PF06968">
    <property type="entry name" value="BATS"/>
    <property type="match status" value="1"/>
</dbReference>
<dbReference type="Pfam" id="PF04055">
    <property type="entry name" value="Radical_SAM"/>
    <property type="match status" value="1"/>
</dbReference>
<dbReference type="PIRSF" id="PIRSF001619">
    <property type="entry name" value="Biotin_synth"/>
    <property type="match status" value="1"/>
</dbReference>
<dbReference type="SFLD" id="SFLDF00272">
    <property type="entry name" value="biotin_synthase"/>
    <property type="match status" value="1"/>
</dbReference>
<dbReference type="SFLD" id="SFLDG01278">
    <property type="entry name" value="biotin_synthase_like"/>
    <property type="match status" value="1"/>
</dbReference>
<dbReference type="SMART" id="SM00876">
    <property type="entry name" value="BATS"/>
    <property type="match status" value="1"/>
</dbReference>
<dbReference type="SMART" id="SM00729">
    <property type="entry name" value="Elp3"/>
    <property type="match status" value="1"/>
</dbReference>
<dbReference type="SUPFAM" id="SSF102114">
    <property type="entry name" value="Radical SAM enzymes"/>
    <property type="match status" value="1"/>
</dbReference>
<dbReference type="PROSITE" id="PS51918">
    <property type="entry name" value="RADICAL_SAM"/>
    <property type="match status" value="1"/>
</dbReference>
<evidence type="ECO:0000255" key="1">
    <source>
        <dbReference type="HAMAP-Rule" id="MF_01694"/>
    </source>
</evidence>
<evidence type="ECO:0000255" key="2">
    <source>
        <dbReference type="PROSITE-ProRule" id="PRU01266"/>
    </source>
</evidence>
<sequence length="329" mass="36549">MTLRNDWTRDEIQALYDQPFLDLVFEAQSVHRQHFQANTIQVSTLLSIKTGKCPEDCKYCSQSAHYDSKLEAEKRIAVDKVISEAQAAKESGSSRFCMGAAWRNPHERDMPYVLEMVREVKALGLETCMTLGMLNQSQAERLKDAGLDYYNHNLDTSREYYSHIISTRTFDDRLNTLDHVRHAGMKVCSGGIVGLGESRNDRIGLLQELATMPVHPESVPINMLVPIEGTPLAEVEKLDVTEWIRTIAVARIIMPHSYIRLSAGRESLSDSDQALAFMAGANSLFSGEKLLTTPNAGEGKDQILFAKLGLTAEKAKPTVAELSVDAMSA</sequence>
<comment type="function">
    <text evidence="1">Catalyzes the conversion of dethiobiotin (DTB) to biotin by the insertion of a sulfur atom into dethiobiotin via a radical-based mechanism.</text>
</comment>
<comment type="catalytic activity">
    <reaction evidence="1">
        <text>(4R,5S)-dethiobiotin + (sulfur carrier)-SH + 2 reduced [2Fe-2S]-[ferredoxin] + 2 S-adenosyl-L-methionine = (sulfur carrier)-H + biotin + 2 5'-deoxyadenosine + 2 L-methionine + 2 oxidized [2Fe-2S]-[ferredoxin]</text>
        <dbReference type="Rhea" id="RHEA:22060"/>
        <dbReference type="Rhea" id="RHEA-COMP:10000"/>
        <dbReference type="Rhea" id="RHEA-COMP:10001"/>
        <dbReference type="Rhea" id="RHEA-COMP:14737"/>
        <dbReference type="Rhea" id="RHEA-COMP:14739"/>
        <dbReference type="ChEBI" id="CHEBI:17319"/>
        <dbReference type="ChEBI" id="CHEBI:29917"/>
        <dbReference type="ChEBI" id="CHEBI:33737"/>
        <dbReference type="ChEBI" id="CHEBI:33738"/>
        <dbReference type="ChEBI" id="CHEBI:57586"/>
        <dbReference type="ChEBI" id="CHEBI:57844"/>
        <dbReference type="ChEBI" id="CHEBI:59789"/>
        <dbReference type="ChEBI" id="CHEBI:64428"/>
        <dbReference type="ChEBI" id="CHEBI:149473"/>
        <dbReference type="EC" id="2.8.1.6"/>
    </reaction>
</comment>
<comment type="cofactor">
    <cofactor evidence="1">
        <name>[4Fe-4S] cluster</name>
        <dbReference type="ChEBI" id="CHEBI:49883"/>
    </cofactor>
    <text evidence="1">Binds 1 [4Fe-4S] cluster. The cluster is coordinated with 3 cysteines and an exchangeable S-adenosyl-L-methionine.</text>
</comment>
<comment type="cofactor">
    <cofactor evidence="1">
        <name>[2Fe-2S] cluster</name>
        <dbReference type="ChEBI" id="CHEBI:190135"/>
    </cofactor>
    <text evidence="1">Binds 1 [2Fe-2S] cluster. The cluster is coordinated with 3 cysteines and 1 arginine.</text>
</comment>
<comment type="pathway">
    <text evidence="1">Cofactor biosynthesis; biotin biosynthesis; biotin from 7,8-diaminononanoate: step 2/2.</text>
</comment>
<comment type="subunit">
    <text evidence="1">Homodimer.</text>
</comment>
<comment type="similarity">
    <text evidence="1">Belongs to the radical SAM superfamily. Biotin synthase family.</text>
</comment>
<protein>
    <recommendedName>
        <fullName evidence="1">Biotin synthase</fullName>
        <ecNumber evidence="1">2.8.1.6</ecNumber>
    </recommendedName>
</protein>